<protein>
    <recommendedName>
        <fullName>Probable zeta-carotene desaturase</fullName>
        <ecNumber>1.3.5.6</ecNumber>
    </recommendedName>
    <alternativeName>
        <fullName>9,9'-di-cis-zeta-carotene desaturase</fullName>
    </alternativeName>
    <alternativeName>
        <fullName>Carotene 7,8-desaturase</fullName>
    </alternativeName>
</protein>
<accession>Q31N27</accession>
<keyword id="KW-0125">Carotenoid biosynthesis</keyword>
<keyword id="KW-0560">Oxidoreductase</keyword>
<keyword id="KW-1185">Reference proteome</keyword>
<feature type="chain" id="PRO_0000413009" description="Probable zeta-carotene desaturase">
    <location>
        <begin position="1"/>
        <end position="481"/>
    </location>
</feature>
<name>ZDS_SYNE7</name>
<sequence length="481" mass="53278">MRVAIVGAGLAGLAAAIDLVDAGHQVAIYDSRPFVGGKVGSWIDADGNHIEMGLHVFFFNYANLFALMRKVGAFENLLPKAHTHTFINKGGEVGELDFRFPIGAPFNGLKAFFTTSQLTWLDKLQNALALGTSPLVRGILDYEGAMKIIRALDRISFADWFRSHGGSEGSLKRMWNPIAYALGFIDTENISARCMLTVFQMFAAKTEASKLNLLAGSPAEYLHKPILDYIQARGATLHLRRRVREIEYTETNGQTVVTGLQIADGDAVERVEADVYLAACDVPGIQRLLPEAWRKWSEFDNIYKLDAVPVATVQLRFDGWVTELGDREKRHQLDHATGLDNLLYTADADFSCFTDLALSSPKDYYRKGQGSLLQCVLTPGDPFIAMKNEDIAQHVLKQVHELFPSSRDLNMTWSNVVKLAQSLYREAPGMDPFRPDQKTPIANFFLAGSYTQQDYIDSMEGATISGRRAAKAMLEAQAIAA</sequence>
<comment type="function">
    <text evidence="1">Catalyzes the conversion of zeta-carotene to lycopene via the intermediary of neurosporene. It carries out two consecutive desaturations (introduction of double bonds) at positions C-7 and C-7' (By similarity).</text>
</comment>
<comment type="catalytic activity">
    <reaction>
        <text>9,9'-di-cis-zeta-carotene + 2 a quinone = 7,7',9,9'-tetra-cis-lycopene + 2 a quinol</text>
        <dbReference type="Rhea" id="RHEA:30955"/>
        <dbReference type="ChEBI" id="CHEBI:24646"/>
        <dbReference type="ChEBI" id="CHEBI:48716"/>
        <dbReference type="ChEBI" id="CHEBI:62466"/>
        <dbReference type="ChEBI" id="CHEBI:132124"/>
        <dbReference type="EC" id="1.3.5.6"/>
    </reaction>
</comment>
<comment type="cofactor">
    <cofactor evidence="1">
        <name>decylplastoquinone</name>
        <dbReference type="ChEBI" id="CHEBI:72953"/>
    </cofactor>
    <cofactor evidence="1">
        <name>6-decylubiquinone</name>
        <dbReference type="ChEBI" id="CHEBI:52020"/>
    </cofactor>
    <text evidence="1">Lipophilic quinones such as decyl-plastoquinone or decyl-ubiquinone.</text>
</comment>
<comment type="pathway">
    <text>Carotenoid biosynthesis; lycopene biosynthesis.</text>
</comment>
<comment type="similarity">
    <text evidence="2">Belongs to the zeta carotene desaturase family.</text>
</comment>
<organism>
    <name type="scientific">Synechococcus elongatus (strain ATCC 33912 / PCC 7942 / FACHB-805)</name>
    <name type="common">Anacystis nidulans R2</name>
    <dbReference type="NCBI Taxonomy" id="1140"/>
    <lineage>
        <taxon>Bacteria</taxon>
        <taxon>Bacillati</taxon>
        <taxon>Cyanobacteriota</taxon>
        <taxon>Cyanophyceae</taxon>
        <taxon>Synechococcales</taxon>
        <taxon>Synechococcaceae</taxon>
        <taxon>Synechococcus</taxon>
    </lineage>
</organism>
<evidence type="ECO:0000250" key="1"/>
<evidence type="ECO:0000305" key="2"/>
<proteinExistence type="inferred from homology"/>
<gene>
    <name type="primary">zds</name>
    <name type="synonym">crtQb</name>
    <name type="ordered locus">Synpcc7942_1512</name>
</gene>
<dbReference type="EC" id="1.3.5.6"/>
<dbReference type="EMBL" id="CP000100">
    <property type="protein sequence ID" value="ABB57542.1"/>
    <property type="molecule type" value="Genomic_DNA"/>
</dbReference>
<dbReference type="RefSeq" id="WP_011378061.1">
    <property type="nucleotide sequence ID" value="NZ_JACJTX010000004.1"/>
</dbReference>
<dbReference type="SMR" id="Q31N27"/>
<dbReference type="STRING" id="1140.Synpcc7942_1512"/>
<dbReference type="PaxDb" id="1140-Synpcc7942_1512"/>
<dbReference type="GeneID" id="72430453"/>
<dbReference type="KEGG" id="syf:Synpcc7942_1512"/>
<dbReference type="eggNOG" id="COG3349">
    <property type="taxonomic scope" value="Bacteria"/>
</dbReference>
<dbReference type="HOGENOM" id="CLU_022687_1_1_3"/>
<dbReference type="OrthoDB" id="438203at2"/>
<dbReference type="BioCyc" id="SYNEL:SYNPCC7942_1512-MONOMER"/>
<dbReference type="UniPathway" id="UPA00803"/>
<dbReference type="Proteomes" id="UP000889800">
    <property type="component" value="Chromosome"/>
</dbReference>
<dbReference type="GO" id="GO:0016719">
    <property type="term" value="F:9,9'-di-cis-zeta-carotene desaturase activity"/>
    <property type="evidence" value="ECO:0007669"/>
    <property type="project" value="UniProtKB-EC"/>
</dbReference>
<dbReference type="GO" id="GO:0016117">
    <property type="term" value="P:carotenoid biosynthetic process"/>
    <property type="evidence" value="ECO:0007669"/>
    <property type="project" value="UniProtKB-KW"/>
</dbReference>
<dbReference type="Gene3D" id="3.50.50.60">
    <property type="entry name" value="FAD/NAD(P)-binding domain"/>
    <property type="match status" value="2"/>
</dbReference>
<dbReference type="InterPro" id="IPR002937">
    <property type="entry name" value="Amino_oxidase"/>
</dbReference>
<dbReference type="InterPro" id="IPR036188">
    <property type="entry name" value="FAD/NAD-bd_sf"/>
</dbReference>
<dbReference type="InterPro" id="IPR014103">
    <property type="entry name" value="Zeta_caro_desat"/>
</dbReference>
<dbReference type="InterPro" id="IPR050464">
    <property type="entry name" value="Zeta_carotene_desat/Oxidored"/>
</dbReference>
<dbReference type="NCBIfam" id="TIGR02732">
    <property type="entry name" value="zeta_caro_desat"/>
    <property type="match status" value="1"/>
</dbReference>
<dbReference type="PANTHER" id="PTHR42923">
    <property type="entry name" value="PROTOPORPHYRINOGEN OXIDASE"/>
    <property type="match status" value="1"/>
</dbReference>
<dbReference type="PANTHER" id="PTHR42923:SF41">
    <property type="entry name" value="ZETA-CAROTENE DESATURASE, CHLOROPLASTIC_CHROMOPLASTIC"/>
    <property type="match status" value="1"/>
</dbReference>
<dbReference type="Pfam" id="PF01593">
    <property type="entry name" value="Amino_oxidase"/>
    <property type="match status" value="1"/>
</dbReference>
<dbReference type="PRINTS" id="PR00419">
    <property type="entry name" value="ADXRDTASE"/>
</dbReference>
<dbReference type="SUPFAM" id="SSF51905">
    <property type="entry name" value="FAD/NAD(P)-binding domain"/>
    <property type="match status" value="1"/>
</dbReference>
<reference key="1">
    <citation type="submission" date="2005-08" db="EMBL/GenBank/DDBJ databases">
        <title>Complete sequence of chromosome 1 of Synechococcus elongatus PCC 7942.</title>
        <authorList>
            <consortium name="US DOE Joint Genome Institute"/>
            <person name="Copeland A."/>
            <person name="Lucas S."/>
            <person name="Lapidus A."/>
            <person name="Barry K."/>
            <person name="Detter J.C."/>
            <person name="Glavina T."/>
            <person name="Hammon N."/>
            <person name="Israni S."/>
            <person name="Pitluck S."/>
            <person name="Schmutz J."/>
            <person name="Larimer F."/>
            <person name="Land M."/>
            <person name="Kyrpides N."/>
            <person name="Lykidis A."/>
            <person name="Golden S."/>
            <person name="Richardson P."/>
        </authorList>
    </citation>
    <scope>NUCLEOTIDE SEQUENCE [LARGE SCALE GENOMIC DNA]</scope>
    <source>
        <strain>ATCC 33912 / PCC 7942 / FACHB-805</strain>
    </source>
</reference>